<organism>
    <name type="scientific">Carboxydothermus hydrogenoformans (strain ATCC BAA-161 / DSM 6008 / Z-2901)</name>
    <dbReference type="NCBI Taxonomy" id="246194"/>
    <lineage>
        <taxon>Bacteria</taxon>
        <taxon>Bacillati</taxon>
        <taxon>Bacillota</taxon>
        <taxon>Clostridia</taxon>
        <taxon>Thermoanaerobacterales</taxon>
        <taxon>Thermoanaerobacteraceae</taxon>
        <taxon>Carboxydothermus</taxon>
    </lineage>
</organism>
<evidence type="ECO:0000255" key="1">
    <source>
        <dbReference type="HAMAP-Rule" id="MF_00378"/>
    </source>
</evidence>
<protein>
    <recommendedName>
        <fullName evidence="1">Exodeoxyribonuclease 7 large subunit</fullName>
        <ecNumber evidence="1">3.1.11.6</ecNumber>
    </recommendedName>
    <alternativeName>
        <fullName evidence="1">Exodeoxyribonuclease VII large subunit</fullName>
        <shortName evidence="1">Exonuclease VII large subunit</shortName>
    </alternativeName>
</protein>
<comment type="function">
    <text evidence="1">Bidirectionally degrades single-stranded DNA into large acid-insoluble oligonucleotides, which are then degraded further into small acid-soluble oligonucleotides.</text>
</comment>
<comment type="catalytic activity">
    <reaction evidence="1">
        <text>Exonucleolytic cleavage in either 5'- to 3'- or 3'- to 5'-direction to yield nucleoside 5'-phosphates.</text>
        <dbReference type="EC" id="3.1.11.6"/>
    </reaction>
</comment>
<comment type="subunit">
    <text evidence="1">Heterooligomer composed of large and small subunits.</text>
</comment>
<comment type="subcellular location">
    <subcellularLocation>
        <location evidence="1">Cytoplasm</location>
    </subcellularLocation>
</comment>
<comment type="similarity">
    <text evidence="1">Belongs to the XseA family.</text>
</comment>
<reference key="1">
    <citation type="journal article" date="2005" name="PLoS Genet.">
        <title>Life in hot carbon monoxide: the complete genome sequence of Carboxydothermus hydrogenoformans Z-2901.</title>
        <authorList>
            <person name="Wu M."/>
            <person name="Ren Q."/>
            <person name="Durkin A.S."/>
            <person name="Daugherty S.C."/>
            <person name="Brinkac L.M."/>
            <person name="Dodson R.J."/>
            <person name="Madupu R."/>
            <person name="Sullivan S.A."/>
            <person name="Kolonay J.F."/>
            <person name="Nelson W.C."/>
            <person name="Tallon L.J."/>
            <person name="Jones K.M."/>
            <person name="Ulrich L.E."/>
            <person name="Gonzalez J.M."/>
            <person name="Zhulin I.B."/>
            <person name="Robb F.T."/>
            <person name="Eisen J.A."/>
        </authorList>
    </citation>
    <scope>NUCLEOTIDE SEQUENCE [LARGE SCALE GENOMIC DNA]</scope>
    <source>
        <strain>ATCC BAA-161 / DSM 6008 / Z-2901</strain>
    </source>
</reference>
<feature type="chain" id="PRO_1000079977" description="Exodeoxyribonuclease 7 large subunit">
    <location>
        <begin position="1"/>
        <end position="472"/>
    </location>
</feature>
<gene>
    <name evidence="1" type="primary">xseA</name>
    <name type="ordered locus">CHY_1990</name>
</gene>
<accession>Q3AAM5</accession>
<name>EX7L_CARHZ</name>
<keyword id="KW-0963">Cytoplasm</keyword>
<keyword id="KW-0269">Exonuclease</keyword>
<keyword id="KW-0378">Hydrolase</keyword>
<keyword id="KW-0540">Nuclease</keyword>
<keyword id="KW-1185">Reference proteome</keyword>
<proteinExistence type="inferred from homology"/>
<dbReference type="EC" id="3.1.11.6" evidence="1"/>
<dbReference type="EMBL" id="CP000141">
    <property type="protein sequence ID" value="ABB14314.1"/>
    <property type="molecule type" value="Genomic_DNA"/>
</dbReference>
<dbReference type="RefSeq" id="WP_011344882.1">
    <property type="nucleotide sequence ID" value="NC_007503.1"/>
</dbReference>
<dbReference type="SMR" id="Q3AAM5"/>
<dbReference type="FunCoup" id="Q3AAM5">
    <property type="interactions" value="380"/>
</dbReference>
<dbReference type="STRING" id="246194.CHY_1990"/>
<dbReference type="KEGG" id="chy:CHY_1990"/>
<dbReference type="eggNOG" id="COG1570">
    <property type="taxonomic scope" value="Bacteria"/>
</dbReference>
<dbReference type="HOGENOM" id="CLU_023625_3_1_9"/>
<dbReference type="InParanoid" id="Q3AAM5"/>
<dbReference type="OrthoDB" id="9802795at2"/>
<dbReference type="Proteomes" id="UP000002706">
    <property type="component" value="Chromosome"/>
</dbReference>
<dbReference type="GO" id="GO:0005737">
    <property type="term" value="C:cytoplasm"/>
    <property type="evidence" value="ECO:0007669"/>
    <property type="project" value="UniProtKB-SubCell"/>
</dbReference>
<dbReference type="GO" id="GO:0009318">
    <property type="term" value="C:exodeoxyribonuclease VII complex"/>
    <property type="evidence" value="ECO:0007669"/>
    <property type="project" value="InterPro"/>
</dbReference>
<dbReference type="GO" id="GO:0008855">
    <property type="term" value="F:exodeoxyribonuclease VII activity"/>
    <property type="evidence" value="ECO:0007669"/>
    <property type="project" value="UniProtKB-UniRule"/>
</dbReference>
<dbReference type="GO" id="GO:0003676">
    <property type="term" value="F:nucleic acid binding"/>
    <property type="evidence" value="ECO:0007669"/>
    <property type="project" value="InterPro"/>
</dbReference>
<dbReference type="GO" id="GO:0006308">
    <property type="term" value="P:DNA catabolic process"/>
    <property type="evidence" value="ECO:0007669"/>
    <property type="project" value="UniProtKB-UniRule"/>
</dbReference>
<dbReference type="CDD" id="cd04489">
    <property type="entry name" value="ExoVII_LU_OBF"/>
    <property type="match status" value="1"/>
</dbReference>
<dbReference type="HAMAP" id="MF_00378">
    <property type="entry name" value="Exonuc_7_L"/>
    <property type="match status" value="1"/>
</dbReference>
<dbReference type="InterPro" id="IPR003753">
    <property type="entry name" value="Exonuc_VII_L"/>
</dbReference>
<dbReference type="InterPro" id="IPR020579">
    <property type="entry name" value="Exonuc_VII_lsu_C"/>
</dbReference>
<dbReference type="InterPro" id="IPR025824">
    <property type="entry name" value="OB-fold_nuc-bd_dom"/>
</dbReference>
<dbReference type="NCBIfam" id="TIGR00237">
    <property type="entry name" value="xseA"/>
    <property type="match status" value="1"/>
</dbReference>
<dbReference type="PANTHER" id="PTHR30008">
    <property type="entry name" value="EXODEOXYRIBONUCLEASE 7 LARGE SUBUNIT"/>
    <property type="match status" value="1"/>
</dbReference>
<dbReference type="PANTHER" id="PTHR30008:SF0">
    <property type="entry name" value="EXODEOXYRIBONUCLEASE 7 LARGE SUBUNIT"/>
    <property type="match status" value="1"/>
</dbReference>
<dbReference type="Pfam" id="PF02601">
    <property type="entry name" value="Exonuc_VII_L"/>
    <property type="match status" value="1"/>
</dbReference>
<dbReference type="Pfam" id="PF13742">
    <property type="entry name" value="tRNA_anti_2"/>
    <property type="match status" value="1"/>
</dbReference>
<sequence>MALFIVTVSELTDYIAEKFEKDDWLNQVAVEGELSNCKFSQGHLYFTLKDERAELKGVMYKGRASALPFIPQDGQKVIVFGQVAVYKKRGIYQIYAEMIEPLGIGALYLKFEQTKEKLRDKGYFAEERKKKLPRYPEKIGIVTSKNGAAIRDILTTIKKRWPKATLYLVPVAVQGDEAPGQIVKALNLLNRYKLCEVIILARGGGSFEELAAFNEETVADAIYASNIPVVTGIGHETDTSIADMVADRRAPTPTGAAVEATPNLVEIWNNLREQRQKMVKALANYFQREQKNLEFQERRILRAYEKLITDKSREVTEGLERLLRSFKTTFQQEKNRLSLLKEKLILLSPYLRHKQQKEKLEELKERLFLRCAELLKRNQAVLIQQSLRLRTSVKNLVLQKNLVLSSYEERLKLLNPLKILNRGYAVVFDFEGRVVTSVNNLPERFKIKFSDGEALAKALGKNIIEGDKNDDL</sequence>